<sequence length="37" mass="3970">DGECGDKDEPCCGRPDGAKVCNDPWVCILTSSRCENP</sequence>
<feature type="chain" id="PRO_0000444692" description="Delta/kappa-conotoxin Mo3964" evidence="1">
    <location>
        <begin position="1"/>
        <end position="37"/>
    </location>
</feature>
<feature type="disulfide bond" evidence="1 5">
    <location>
        <begin position="4"/>
        <end position="12"/>
    </location>
</feature>
<feature type="disulfide bond" evidence="1 5">
    <location>
        <begin position="11"/>
        <end position="27"/>
    </location>
</feature>
<feature type="disulfide bond" evidence="1 5">
    <location>
        <begin position="21"/>
        <end position="34"/>
    </location>
</feature>
<feature type="turn" evidence="6">
    <location>
        <begin position="29"/>
        <end position="31"/>
    </location>
</feature>
<feature type="strand" evidence="6">
    <location>
        <begin position="33"/>
        <end position="35"/>
    </location>
</feature>
<comment type="function">
    <text evidence="1">This toxin reduces the outward currents that are due to the opening of voltage-gated potassium channels in DRG neurons. In addition, leftward shift in the presence of this toxin is observed in averaged normalized conductance-voltage plot of outward sodium currents (Nav1.2/SCN2A).</text>
</comment>
<comment type="subcellular location">
    <subcellularLocation>
        <location evidence="4">Secreted</location>
    </subcellularLocation>
</comment>
<comment type="tissue specificity">
    <text evidence="4">Expressed by the venom duct.</text>
</comment>
<comment type="domain">
    <text evidence="3">The cysteine framework is XXXII (C-CC-C-C-C).</text>
</comment>
<comment type="miscellaneous">
    <text evidence="1">Exists in two forms, due to cis-trans isomerization at 23-Asp-Pro-24.</text>
</comment>
<organism>
    <name type="scientific">Conus monile</name>
    <name type="common">Necklace cone</name>
    <dbReference type="NCBI Taxonomy" id="351660"/>
    <lineage>
        <taxon>Eukaryota</taxon>
        <taxon>Metazoa</taxon>
        <taxon>Spiralia</taxon>
        <taxon>Lophotrochozoa</taxon>
        <taxon>Mollusca</taxon>
        <taxon>Gastropoda</taxon>
        <taxon>Caenogastropoda</taxon>
        <taxon>Neogastropoda</taxon>
        <taxon>Conoidea</taxon>
        <taxon>Conidae</taxon>
        <taxon>Conus</taxon>
        <taxon>Strategoconus</taxon>
    </lineage>
</organism>
<protein>
    <recommendedName>
        <fullName evidence="3">Delta/kappa-conotoxin Mo3964</fullName>
        <shortName evidence="2">Mo3964</shortName>
    </recommendedName>
</protein>
<proteinExistence type="evidence at protein level"/>
<keyword id="KW-0002">3D-structure</keyword>
<keyword id="KW-1015">Disulfide bond</keyword>
<keyword id="KW-0872">Ion channel impairing toxin</keyword>
<keyword id="KW-0528">Neurotoxin</keyword>
<keyword id="KW-0632">Potassium channel impairing toxin</keyword>
<keyword id="KW-0964">Secreted</keyword>
<keyword id="KW-0800">Toxin</keyword>
<keyword id="KW-1220">Voltage-gated potassium channel impairing toxin</keyword>
<keyword id="KW-0738">Voltage-gated sodium channel impairing toxin</keyword>
<name>CXRA_CONMO</name>
<reference key="1">
    <citation type="journal article" date="2015" name="ACS Chem. Biol.">
        <title>A disulfide stabilized beta-sandwich defines the structure of a new cysteine framework M-superfamily conotoxin.</title>
        <authorList>
            <person name="Kancherla A.K."/>
            <person name="Meesala S."/>
            <person name="Jorwal P."/>
            <person name="Palanisamy R."/>
            <person name="Sikdar S.K."/>
            <person name="Sarma S.P."/>
        </authorList>
    </citation>
    <scope>STRUCTURE BY NMR</scope>
    <scope>FUNCTION</scope>
    <scope>DISULFIDE BONDS</scope>
</reference>
<dbReference type="PDB" id="2MW7">
    <property type="method" value="NMR"/>
    <property type="chains" value="A=1-37"/>
</dbReference>
<dbReference type="PDBsum" id="2MW7"/>
<dbReference type="SMR" id="A0A0R4I952"/>
<dbReference type="ConoServer" id="7063">
    <property type="toxin name" value="Mo3964"/>
</dbReference>
<dbReference type="GO" id="GO:0005576">
    <property type="term" value="C:extracellular region"/>
    <property type="evidence" value="ECO:0007669"/>
    <property type="project" value="UniProtKB-SubCell"/>
</dbReference>
<dbReference type="GO" id="GO:0015459">
    <property type="term" value="F:potassium channel regulator activity"/>
    <property type="evidence" value="ECO:0007669"/>
    <property type="project" value="UniProtKB-KW"/>
</dbReference>
<dbReference type="GO" id="GO:0017080">
    <property type="term" value="F:sodium channel regulator activity"/>
    <property type="evidence" value="ECO:0007669"/>
    <property type="project" value="UniProtKB-KW"/>
</dbReference>
<dbReference type="GO" id="GO:0090729">
    <property type="term" value="F:toxin activity"/>
    <property type="evidence" value="ECO:0007669"/>
    <property type="project" value="UniProtKB-KW"/>
</dbReference>
<accession>A0A0R4I952</accession>
<evidence type="ECO:0000269" key="1">
    <source>
    </source>
</evidence>
<evidence type="ECO:0000303" key="2">
    <source>
    </source>
</evidence>
<evidence type="ECO:0000305" key="3"/>
<evidence type="ECO:0000305" key="4">
    <source>
    </source>
</evidence>
<evidence type="ECO:0000312" key="5">
    <source>
        <dbReference type="PDB" id="2MW7"/>
    </source>
</evidence>
<evidence type="ECO:0007829" key="6">
    <source>
        <dbReference type="PDB" id="2MW7"/>
    </source>
</evidence>